<reference key="1">
    <citation type="journal article" date="2007" name="PLoS ONE">
        <title>Complete genomic characterization of a pathogenic A.II strain of Francisella tularensis subspecies tularensis.</title>
        <authorList>
            <person name="Beckstrom-Sternberg S.M."/>
            <person name="Auerbach R.K."/>
            <person name="Godbole S."/>
            <person name="Pearson J.V."/>
            <person name="Beckstrom-Sternberg J.S."/>
            <person name="Deng Z."/>
            <person name="Munk C."/>
            <person name="Kubota K."/>
            <person name="Zhou Y."/>
            <person name="Bruce D."/>
            <person name="Noronha J."/>
            <person name="Scheuermann R.H."/>
            <person name="Wang A."/>
            <person name="Wei X."/>
            <person name="Wang J."/>
            <person name="Hao J."/>
            <person name="Wagner D.M."/>
            <person name="Brettin T.S."/>
            <person name="Brown N."/>
            <person name="Gilna P."/>
            <person name="Keim P.S."/>
        </authorList>
    </citation>
    <scope>NUCLEOTIDE SEQUENCE [LARGE SCALE GENOMIC DNA]</scope>
    <source>
        <strain>WY96-3418</strain>
    </source>
</reference>
<evidence type="ECO:0000255" key="1">
    <source>
        <dbReference type="HAMAP-Rule" id="MF_00031"/>
    </source>
</evidence>
<comment type="function">
    <text evidence="1">The RuvA-RuvB-RuvC complex processes Holliday junction (HJ) DNA during genetic recombination and DNA repair, while the RuvA-RuvB complex plays an important role in the rescue of blocked DNA replication forks via replication fork reversal (RFR). RuvA specifically binds to HJ cruciform DNA, conferring on it an open structure. The RuvB hexamer acts as an ATP-dependent pump, pulling dsDNA into and through the RuvAB complex. HJ branch migration allows RuvC to scan DNA until it finds its consensus sequence, where it cleaves and resolves the cruciform DNA.</text>
</comment>
<comment type="subunit">
    <text evidence="1">Homotetramer. Forms an RuvA(8)-RuvB(12)-Holliday junction (HJ) complex. HJ DNA is sandwiched between 2 RuvA tetramers; dsDNA enters through RuvA and exits via RuvB. An RuvB hexamer assembles on each DNA strand where it exits the tetramer. Each RuvB hexamer is contacted by two RuvA subunits (via domain III) on 2 adjacent RuvB subunits; this complex drives branch migration. In the full resolvosome a probable DNA-RuvA(4)-RuvB(12)-RuvC(2) complex forms which resolves the HJ.</text>
</comment>
<comment type="subcellular location">
    <subcellularLocation>
        <location evidence="1">Cytoplasm</location>
    </subcellularLocation>
</comment>
<comment type="domain">
    <text evidence="1">Has three domains with a flexible linker between the domains II and III and assumes an 'L' shape. Domain III is highly mobile and contacts RuvB.</text>
</comment>
<comment type="similarity">
    <text evidence="1">Belongs to the RuvA family.</text>
</comment>
<dbReference type="EMBL" id="CP000608">
    <property type="protein sequence ID" value="ABO46886.1"/>
    <property type="molecule type" value="Genomic_DNA"/>
</dbReference>
<dbReference type="RefSeq" id="WP_003026241.1">
    <property type="nucleotide sequence ID" value="NC_009257.1"/>
</dbReference>
<dbReference type="SMR" id="A4IY85"/>
<dbReference type="KEGG" id="ftw:FTW_1070"/>
<dbReference type="HOGENOM" id="CLU_087936_0_0_6"/>
<dbReference type="GO" id="GO:0005737">
    <property type="term" value="C:cytoplasm"/>
    <property type="evidence" value="ECO:0007669"/>
    <property type="project" value="UniProtKB-SubCell"/>
</dbReference>
<dbReference type="GO" id="GO:0009379">
    <property type="term" value="C:Holliday junction helicase complex"/>
    <property type="evidence" value="ECO:0007669"/>
    <property type="project" value="InterPro"/>
</dbReference>
<dbReference type="GO" id="GO:0048476">
    <property type="term" value="C:Holliday junction resolvase complex"/>
    <property type="evidence" value="ECO:0007669"/>
    <property type="project" value="UniProtKB-UniRule"/>
</dbReference>
<dbReference type="GO" id="GO:0005524">
    <property type="term" value="F:ATP binding"/>
    <property type="evidence" value="ECO:0007669"/>
    <property type="project" value="InterPro"/>
</dbReference>
<dbReference type="GO" id="GO:0000400">
    <property type="term" value="F:four-way junction DNA binding"/>
    <property type="evidence" value="ECO:0007669"/>
    <property type="project" value="UniProtKB-UniRule"/>
</dbReference>
<dbReference type="GO" id="GO:0009378">
    <property type="term" value="F:four-way junction helicase activity"/>
    <property type="evidence" value="ECO:0007669"/>
    <property type="project" value="InterPro"/>
</dbReference>
<dbReference type="GO" id="GO:0006310">
    <property type="term" value="P:DNA recombination"/>
    <property type="evidence" value="ECO:0007669"/>
    <property type="project" value="UniProtKB-UniRule"/>
</dbReference>
<dbReference type="GO" id="GO:0006281">
    <property type="term" value="P:DNA repair"/>
    <property type="evidence" value="ECO:0007669"/>
    <property type="project" value="UniProtKB-UniRule"/>
</dbReference>
<dbReference type="CDD" id="cd14332">
    <property type="entry name" value="UBA_RuvA_C"/>
    <property type="match status" value="1"/>
</dbReference>
<dbReference type="Gene3D" id="1.10.150.20">
    <property type="entry name" value="5' to 3' exonuclease, C-terminal subdomain"/>
    <property type="match status" value="1"/>
</dbReference>
<dbReference type="Gene3D" id="1.10.8.10">
    <property type="entry name" value="DNA helicase RuvA subunit, C-terminal domain"/>
    <property type="match status" value="1"/>
</dbReference>
<dbReference type="Gene3D" id="2.40.50.140">
    <property type="entry name" value="Nucleic acid-binding proteins"/>
    <property type="match status" value="1"/>
</dbReference>
<dbReference type="HAMAP" id="MF_00031">
    <property type="entry name" value="DNA_HJ_migration_RuvA"/>
    <property type="match status" value="1"/>
</dbReference>
<dbReference type="InterPro" id="IPR013849">
    <property type="entry name" value="DNA_helicase_Holl-junc_RuvA_I"/>
</dbReference>
<dbReference type="InterPro" id="IPR003583">
    <property type="entry name" value="Hlx-hairpin-Hlx_DNA-bd_motif"/>
</dbReference>
<dbReference type="InterPro" id="IPR012340">
    <property type="entry name" value="NA-bd_OB-fold"/>
</dbReference>
<dbReference type="InterPro" id="IPR000085">
    <property type="entry name" value="RuvA"/>
</dbReference>
<dbReference type="InterPro" id="IPR010994">
    <property type="entry name" value="RuvA_2-like"/>
</dbReference>
<dbReference type="InterPro" id="IPR011114">
    <property type="entry name" value="RuvA_C"/>
</dbReference>
<dbReference type="InterPro" id="IPR036267">
    <property type="entry name" value="RuvA_C_sf"/>
</dbReference>
<dbReference type="NCBIfam" id="TIGR00084">
    <property type="entry name" value="ruvA"/>
    <property type="match status" value="1"/>
</dbReference>
<dbReference type="Pfam" id="PF14520">
    <property type="entry name" value="HHH_5"/>
    <property type="match status" value="1"/>
</dbReference>
<dbReference type="Pfam" id="PF07499">
    <property type="entry name" value="RuvA_C"/>
    <property type="match status" value="1"/>
</dbReference>
<dbReference type="Pfam" id="PF01330">
    <property type="entry name" value="RuvA_N"/>
    <property type="match status" value="1"/>
</dbReference>
<dbReference type="SMART" id="SM00278">
    <property type="entry name" value="HhH1"/>
    <property type="match status" value="2"/>
</dbReference>
<dbReference type="SUPFAM" id="SSF46929">
    <property type="entry name" value="DNA helicase RuvA subunit, C-terminal domain"/>
    <property type="match status" value="1"/>
</dbReference>
<dbReference type="SUPFAM" id="SSF50249">
    <property type="entry name" value="Nucleic acid-binding proteins"/>
    <property type="match status" value="1"/>
</dbReference>
<dbReference type="SUPFAM" id="SSF47781">
    <property type="entry name" value="RuvA domain 2-like"/>
    <property type="match status" value="1"/>
</dbReference>
<proteinExistence type="inferred from homology"/>
<name>RUVA_FRATW</name>
<gene>
    <name evidence="1" type="primary">ruvA</name>
    <name type="ordered locus">FTW_1070</name>
</gene>
<protein>
    <recommendedName>
        <fullName evidence="1">Holliday junction branch migration complex subunit RuvA</fullName>
    </recommendedName>
</protein>
<accession>A4IY85</accession>
<feature type="chain" id="PRO_1000002453" description="Holliday junction branch migration complex subunit RuvA">
    <location>
        <begin position="1"/>
        <end position="216"/>
    </location>
</feature>
<feature type="region of interest" description="Domain I" evidence="1">
    <location>
        <begin position="1"/>
        <end position="64"/>
    </location>
</feature>
<feature type="region of interest" description="Domain II" evidence="1">
    <location>
        <begin position="65"/>
        <end position="143"/>
    </location>
</feature>
<feature type="region of interest" description="Flexible linker" evidence="1">
    <location>
        <begin position="144"/>
        <end position="163"/>
    </location>
</feature>
<feature type="region of interest" description="Domain III" evidence="1">
    <location>
        <begin position="164"/>
        <end position="216"/>
    </location>
</feature>
<sequence>MISFIKGVLIEKDPTALLIDVNGIGYEVFVPMTTFYTLGDIDSQVSLYTHFIVREDAQQLYGFKSKVDKKVFQELIKVNGIGARTAIAILSGMDSKTLLHCIENKDYALLATVPGIGKKTAERLVVEIYDKLLKMANEIYAQTSGTTTTSQDSQAQQAPTSVVLANSIFNESVDALLALGYKQKDAEKMARSAMGDATTAAEVIRKALQGSIKSKR</sequence>
<organism>
    <name type="scientific">Francisella tularensis subsp. tularensis (strain WY96-3418)</name>
    <dbReference type="NCBI Taxonomy" id="418136"/>
    <lineage>
        <taxon>Bacteria</taxon>
        <taxon>Pseudomonadati</taxon>
        <taxon>Pseudomonadota</taxon>
        <taxon>Gammaproteobacteria</taxon>
        <taxon>Thiotrichales</taxon>
        <taxon>Francisellaceae</taxon>
        <taxon>Francisella</taxon>
    </lineage>
</organism>
<keyword id="KW-0963">Cytoplasm</keyword>
<keyword id="KW-0227">DNA damage</keyword>
<keyword id="KW-0233">DNA recombination</keyword>
<keyword id="KW-0234">DNA repair</keyword>
<keyword id="KW-0238">DNA-binding</keyword>